<evidence type="ECO:0000255" key="1">
    <source>
        <dbReference type="HAMAP-Rule" id="MF_00417"/>
    </source>
</evidence>
<gene>
    <name evidence="1" type="primary">pcp</name>
    <name type="synonym">pcp1</name>
    <name type="ordered locus">CV_3176</name>
</gene>
<sequence>MKTVLLTGFEPFGGETVNPSWEAARQLDGETIAGARVHARLLPCEFGAALDELYRQLDALRPDVAIAVGQAGGRPDIAVERVAINVDDARFPDNAGRQPIDEPVVANGPAAYFATLPIKAIVAGLRERGLPATVSQSAGTFVCNHVMYGLLHRGGPRAGFIHLPFLPEQAIRHPGAFSLKLDDCVAALRLAVELSLTRGKDEKREGGTIH</sequence>
<accession>Q7NT84</accession>
<protein>
    <recommendedName>
        <fullName evidence="1">Pyrrolidone-carboxylate peptidase</fullName>
        <ecNumber evidence="1">3.4.19.3</ecNumber>
    </recommendedName>
    <alternativeName>
        <fullName evidence="1">5-oxoprolyl-peptidase</fullName>
    </alternativeName>
    <alternativeName>
        <fullName evidence="1">Pyroglutamyl-peptidase I</fullName>
        <shortName evidence="1">PGP-I</shortName>
        <shortName evidence="1">Pyrase</shortName>
    </alternativeName>
</protein>
<organism>
    <name type="scientific">Chromobacterium violaceum (strain ATCC 12472 / DSM 30191 / JCM 1249 / CCUG 213 / NBRC 12614 / NCIMB 9131 / NCTC 9757 / MK)</name>
    <dbReference type="NCBI Taxonomy" id="243365"/>
    <lineage>
        <taxon>Bacteria</taxon>
        <taxon>Pseudomonadati</taxon>
        <taxon>Pseudomonadota</taxon>
        <taxon>Betaproteobacteria</taxon>
        <taxon>Neisseriales</taxon>
        <taxon>Chromobacteriaceae</taxon>
        <taxon>Chromobacterium</taxon>
    </lineage>
</organism>
<name>PCP_CHRVO</name>
<dbReference type="EC" id="3.4.19.3" evidence="1"/>
<dbReference type="EMBL" id="AE016825">
    <property type="protein sequence ID" value="AAQ60842.1"/>
    <property type="molecule type" value="Genomic_DNA"/>
</dbReference>
<dbReference type="RefSeq" id="WP_011136723.1">
    <property type="nucleotide sequence ID" value="NC_005085.1"/>
</dbReference>
<dbReference type="SMR" id="Q7NT84"/>
<dbReference type="STRING" id="243365.CV_3176"/>
<dbReference type="MEROPS" id="C15.001"/>
<dbReference type="KEGG" id="cvi:CV_3176"/>
<dbReference type="eggNOG" id="COG2039">
    <property type="taxonomic scope" value="Bacteria"/>
</dbReference>
<dbReference type="HOGENOM" id="CLU_043960_4_0_4"/>
<dbReference type="OrthoDB" id="9779738at2"/>
<dbReference type="Proteomes" id="UP000001424">
    <property type="component" value="Chromosome"/>
</dbReference>
<dbReference type="GO" id="GO:0005829">
    <property type="term" value="C:cytosol"/>
    <property type="evidence" value="ECO:0007669"/>
    <property type="project" value="InterPro"/>
</dbReference>
<dbReference type="GO" id="GO:0016920">
    <property type="term" value="F:pyroglutamyl-peptidase activity"/>
    <property type="evidence" value="ECO:0007669"/>
    <property type="project" value="UniProtKB-UniRule"/>
</dbReference>
<dbReference type="GO" id="GO:0006508">
    <property type="term" value="P:proteolysis"/>
    <property type="evidence" value="ECO:0007669"/>
    <property type="project" value="UniProtKB-KW"/>
</dbReference>
<dbReference type="CDD" id="cd00501">
    <property type="entry name" value="Peptidase_C15"/>
    <property type="match status" value="1"/>
</dbReference>
<dbReference type="FunFam" id="3.40.630.20:FF:000001">
    <property type="entry name" value="Pyrrolidone-carboxylate peptidase"/>
    <property type="match status" value="1"/>
</dbReference>
<dbReference type="Gene3D" id="3.40.630.20">
    <property type="entry name" value="Peptidase C15, pyroglutamyl peptidase I-like"/>
    <property type="match status" value="1"/>
</dbReference>
<dbReference type="HAMAP" id="MF_00417">
    <property type="entry name" value="Pyrrolid_peptidase"/>
    <property type="match status" value="1"/>
</dbReference>
<dbReference type="InterPro" id="IPR000816">
    <property type="entry name" value="Peptidase_C15"/>
</dbReference>
<dbReference type="InterPro" id="IPR016125">
    <property type="entry name" value="Peptidase_C15-like"/>
</dbReference>
<dbReference type="InterPro" id="IPR036440">
    <property type="entry name" value="Peptidase_C15-like_sf"/>
</dbReference>
<dbReference type="InterPro" id="IPR029762">
    <property type="entry name" value="PGP-I_bact-type"/>
</dbReference>
<dbReference type="InterPro" id="IPR033694">
    <property type="entry name" value="PGPEP1_Cys_AS"/>
</dbReference>
<dbReference type="NCBIfam" id="NF009676">
    <property type="entry name" value="PRK13197.1"/>
    <property type="match status" value="1"/>
</dbReference>
<dbReference type="NCBIfam" id="TIGR00504">
    <property type="entry name" value="pyro_pdase"/>
    <property type="match status" value="1"/>
</dbReference>
<dbReference type="PANTHER" id="PTHR23402">
    <property type="entry name" value="PROTEASE FAMILY C15 PYROGLUTAMYL-PEPTIDASE I-RELATED"/>
    <property type="match status" value="1"/>
</dbReference>
<dbReference type="PANTHER" id="PTHR23402:SF1">
    <property type="entry name" value="PYROGLUTAMYL-PEPTIDASE I"/>
    <property type="match status" value="1"/>
</dbReference>
<dbReference type="Pfam" id="PF01470">
    <property type="entry name" value="Peptidase_C15"/>
    <property type="match status" value="1"/>
</dbReference>
<dbReference type="PIRSF" id="PIRSF015592">
    <property type="entry name" value="Prld-crbxl_pptds"/>
    <property type="match status" value="1"/>
</dbReference>
<dbReference type="PRINTS" id="PR00706">
    <property type="entry name" value="PYROGLUPTASE"/>
</dbReference>
<dbReference type="SUPFAM" id="SSF53182">
    <property type="entry name" value="Pyrrolidone carboxyl peptidase (pyroglutamate aminopeptidase)"/>
    <property type="match status" value="1"/>
</dbReference>
<dbReference type="PROSITE" id="PS01334">
    <property type="entry name" value="PYRASE_CYS"/>
    <property type="match status" value="1"/>
</dbReference>
<feature type="chain" id="PRO_0000184714" description="Pyrrolidone-carboxylate peptidase">
    <location>
        <begin position="1"/>
        <end position="210"/>
    </location>
</feature>
<feature type="active site" evidence="1">
    <location>
        <position position="80"/>
    </location>
</feature>
<feature type="active site" evidence="1">
    <location>
        <position position="143"/>
    </location>
</feature>
<feature type="active site" evidence="1">
    <location>
        <position position="162"/>
    </location>
</feature>
<comment type="function">
    <text evidence="1">Removes 5-oxoproline from various penultimate amino acid residues except L-proline.</text>
</comment>
<comment type="catalytic activity">
    <reaction evidence="1">
        <text>Release of an N-terminal pyroglutamyl group from a polypeptide, the second amino acid generally not being Pro.</text>
        <dbReference type="EC" id="3.4.19.3"/>
    </reaction>
</comment>
<comment type="subunit">
    <text evidence="1">Homotetramer.</text>
</comment>
<comment type="subcellular location">
    <subcellularLocation>
        <location evidence="1">Cytoplasm</location>
    </subcellularLocation>
</comment>
<comment type="similarity">
    <text evidence="1">Belongs to the peptidase C15 family.</text>
</comment>
<keyword id="KW-0963">Cytoplasm</keyword>
<keyword id="KW-0378">Hydrolase</keyword>
<keyword id="KW-0645">Protease</keyword>
<keyword id="KW-1185">Reference proteome</keyword>
<keyword id="KW-0788">Thiol protease</keyword>
<proteinExistence type="inferred from homology"/>
<reference key="1">
    <citation type="journal article" date="2003" name="Proc. Natl. Acad. Sci. U.S.A.">
        <title>The complete genome sequence of Chromobacterium violaceum reveals remarkable and exploitable bacterial adaptability.</title>
        <authorList>
            <person name="Vasconcelos A.T.R."/>
            <person name="de Almeida D.F."/>
            <person name="Hungria M."/>
            <person name="Guimaraes C.T."/>
            <person name="Antonio R.V."/>
            <person name="Almeida F.C."/>
            <person name="de Almeida L.G.P."/>
            <person name="de Almeida R."/>
            <person name="Alves-Gomes J.A."/>
            <person name="Andrade E.M."/>
            <person name="Araripe J."/>
            <person name="de Araujo M.F.F."/>
            <person name="Astolfi-Filho S."/>
            <person name="Azevedo V."/>
            <person name="Baptista A.J."/>
            <person name="Bataus L.A.M."/>
            <person name="Batista J.S."/>
            <person name="Belo A."/>
            <person name="van den Berg C."/>
            <person name="Bogo M."/>
            <person name="Bonatto S."/>
            <person name="Bordignon J."/>
            <person name="Brigido M.M."/>
            <person name="Brito C.A."/>
            <person name="Brocchi M."/>
            <person name="Burity H.A."/>
            <person name="Camargo A.A."/>
            <person name="Cardoso D.D.P."/>
            <person name="Carneiro N.P."/>
            <person name="Carraro D.M."/>
            <person name="Carvalho C.M.B."/>
            <person name="Cascardo J.C.M."/>
            <person name="Cavada B.S."/>
            <person name="Chueire L.M.O."/>
            <person name="Creczynski-Pasa T.B."/>
            <person name="Cunha-Junior N.C."/>
            <person name="Fagundes N."/>
            <person name="Falcao C.L."/>
            <person name="Fantinatti F."/>
            <person name="Farias I.P."/>
            <person name="Felipe M.S.S."/>
            <person name="Ferrari L.P."/>
            <person name="Ferro J.A."/>
            <person name="Ferro M.I.T."/>
            <person name="Franco G.R."/>
            <person name="Freitas N.S.A."/>
            <person name="Furlan L.R."/>
            <person name="Gazzinelli R.T."/>
            <person name="Gomes E.A."/>
            <person name="Goncalves P.R."/>
            <person name="Grangeiro T.B."/>
            <person name="Grattapaglia D."/>
            <person name="Grisard E.C."/>
            <person name="Hanna E.S."/>
            <person name="Jardim S.N."/>
            <person name="Laurino J."/>
            <person name="Leoi L.C.T."/>
            <person name="Lima L.F.A."/>
            <person name="Loureiro M.F."/>
            <person name="Lyra M.C.C.P."/>
            <person name="Madeira H.M.F."/>
            <person name="Manfio G.P."/>
            <person name="Maranhao A.Q."/>
            <person name="Martins W.S."/>
            <person name="di Mauro S.M.Z."/>
            <person name="de Medeiros S.R.B."/>
            <person name="Meissner R.V."/>
            <person name="Moreira M.A.M."/>
            <person name="Nascimento F.F."/>
            <person name="Nicolas M.F."/>
            <person name="Oliveira J.G."/>
            <person name="Oliveira S.C."/>
            <person name="Paixao R.F.C."/>
            <person name="Parente J.A."/>
            <person name="Pedrosa F.O."/>
            <person name="Pena S.D.J."/>
            <person name="Pereira J.O."/>
            <person name="Pereira M."/>
            <person name="Pinto L.S.R.C."/>
            <person name="Pinto L.S."/>
            <person name="Porto J.I.R."/>
            <person name="Potrich D.P."/>
            <person name="Ramalho-Neto C.E."/>
            <person name="Reis A.M.M."/>
            <person name="Rigo L.U."/>
            <person name="Rondinelli E."/>
            <person name="Santos E.B.P."/>
            <person name="Santos F.R."/>
            <person name="Schneider M.P.C."/>
            <person name="Seuanez H.N."/>
            <person name="Silva A.M.R."/>
            <person name="da Silva A.L.C."/>
            <person name="Silva D.W."/>
            <person name="Silva R."/>
            <person name="Simoes I.C."/>
            <person name="Simon D."/>
            <person name="Soares C.M.A."/>
            <person name="Soares R.B.A."/>
            <person name="Souza E.M."/>
            <person name="Souza K.R.L."/>
            <person name="Souza R.C."/>
            <person name="Steffens M.B.R."/>
            <person name="Steindel M."/>
            <person name="Teixeira S.R."/>
            <person name="Urmenyi T."/>
            <person name="Vettore A."/>
            <person name="Wassem R."/>
            <person name="Zaha A."/>
            <person name="Simpson A.J.G."/>
        </authorList>
    </citation>
    <scope>NUCLEOTIDE SEQUENCE [LARGE SCALE GENOMIC DNA]</scope>
    <source>
        <strain>ATCC 12472 / DSM 30191 / JCM 1249 / CCUG 213 / NBRC 12614 / NCIMB 9131 / NCTC 9757 / MK</strain>
    </source>
</reference>